<name>CCA_YERP3</name>
<organism>
    <name type="scientific">Yersinia pseudotuberculosis serotype O:1b (strain IP 31758)</name>
    <dbReference type="NCBI Taxonomy" id="349747"/>
    <lineage>
        <taxon>Bacteria</taxon>
        <taxon>Pseudomonadati</taxon>
        <taxon>Pseudomonadota</taxon>
        <taxon>Gammaproteobacteria</taxon>
        <taxon>Enterobacterales</taxon>
        <taxon>Yersiniaceae</taxon>
        <taxon>Yersinia</taxon>
    </lineage>
</organism>
<reference key="1">
    <citation type="journal article" date="2007" name="PLoS Genet.">
        <title>The complete genome sequence of Yersinia pseudotuberculosis IP31758, the causative agent of Far East scarlet-like fever.</title>
        <authorList>
            <person name="Eppinger M."/>
            <person name="Rosovitz M.J."/>
            <person name="Fricke W.F."/>
            <person name="Rasko D.A."/>
            <person name="Kokorina G."/>
            <person name="Fayolle C."/>
            <person name="Lindler L.E."/>
            <person name="Carniel E."/>
            <person name="Ravel J."/>
        </authorList>
    </citation>
    <scope>NUCLEOTIDE SEQUENCE [LARGE SCALE GENOMIC DNA]</scope>
    <source>
        <strain>IP 31758</strain>
    </source>
</reference>
<protein>
    <recommendedName>
        <fullName evidence="1">Multifunctional CCA protein</fullName>
    </recommendedName>
    <domain>
        <recommendedName>
            <fullName evidence="1">CCA-adding enzyme</fullName>
            <ecNumber evidence="1">2.7.7.72</ecNumber>
        </recommendedName>
        <alternativeName>
            <fullName evidence="1">CCA tRNA nucleotidyltransferase</fullName>
        </alternativeName>
        <alternativeName>
            <fullName evidence="1">tRNA CCA-pyrophosphorylase</fullName>
        </alternativeName>
        <alternativeName>
            <fullName evidence="1">tRNA adenylyl-/cytidylyl-transferase</fullName>
        </alternativeName>
        <alternativeName>
            <fullName evidence="1">tRNA nucleotidyltransferase</fullName>
        </alternativeName>
        <alternativeName>
            <fullName evidence="1">tRNA-NT</fullName>
        </alternativeName>
    </domain>
    <domain>
        <recommendedName>
            <fullName evidence="1">2'-nucleotidase</fullName>
            <ecNumber evidence="1">3.1.3.-</ecNumber>
        </recommendedName>
    </domain>
    <domain>
        <recommendedName>
            <fullName evidence="1">2',3'-cyclic phosphodiesterase</fullName>
            <ecNumber evidence="1">3.1.4.-</ecNumber>
        </recommendedName>
    </domain>
    <domain>
        <recommendedName>
            <fullName evidence="1">Phosphatase</fullName>
            <ecNumber evidence="1">3.1.3.-</ecNumber>
        </recommendedName>
    </domain>
</protein>
<gene>
    <name evidence="1" type="primary">cca</name>
    <name type="ordered locus">YpsIP31758_0560</name>
</gene>
<keyword id="KW-0067">ATP-binding</keyword>
<keyword id="KW-0378">Hydrolase</keyword>
<keyword id="KW-0460">Magnesium</keyword>
<keyword id="KW-0479">Metal-binding</keyword>
<keyword id="KW-0511">Multifunctional enzyme</keyword>
<keyword id="KW-0533">Nickel</keyword>
<keyword id="KW-0547">Nucleotide-binding</keyword>
<keyword id="KW-0548">Nucleotidyltransferase</keyword>
<keyword id="KW-0692">RNA repair</keyword>
<keyword id="KW-0694">RNA-binding</keyword>
<keyword id="KW-0808">Transferase</keyword>
<keyword id="KW-0819">tRNA processing</keyword>
<proteinExistence type="inferred from homology"/>
<evidence type="ECO:0000255" key="1">
    <source>
        <dbReference type="HAMAP-Rule" id="MF_01261"/>
    </source>
</evidence>
<sequence length="412" mass="46341">MNIYLVGGAVRDSLLNLPVTEQDWVVVGATPEQLLKLGYQQVGKDFPVFLHPVSHEEYALARTERKSGQGYTGFTCYAAPDVTLEDDLLRRDLTVNAIARSADGEFIDPYHGKQDLENRVLRHVSDAFGEDPLRVLRVARFAARFAYLGFTIAPETMSLMSNMAQSGELSALTPERVWKETEKALKTQSPHVYFQVLRDCGALAVLFPEIERLFGVPAPEKWHPEIDTGIHTLMTLAIAAQLSPEVDIRFAALCHDLGKGLTPKEHWPHHHGHGPAGVKLVEQLCQRLRIPNPVRDLAKLVAEYHDLIHTVNKLRPETLLKLFNAIDVWRKPERLEQMIMTSEADARGRTGFENNPYPQGDYLRAAFQIANGVSIQEVVASGLQGLAIRDELQRRRQQALAEWKQTQETPLI</sequence>
<dbReference type="EC" id="2.7.7.72" evidence="1"/>
<dbReference type="EC" id="3.1.3.-" evidence="1"/>
<dbReference type="EC" id="3.1.4.-" evidence="1"/>
<dbReference type="EMBL" id="CP000720">
    <property type="protein sequence ID" value="ABS45973.1"/>
    <property type="molecule type" value="Genomic_DNA"/>
</dbReference>
<dbReference type="RefSeq" id="WP_011193101.1">
    <property type="nucleotide sequence ID" value="NC_009708.1"/>
</dbReference>
<dbReference type="SMR" id="A7FE75"/>
<dbReference type="KEGG" id="ypi:YpsIP31758_0560"/>
<dbReference type="HOGENOM" id="CLU_015961_1_1_6"/>
<dbReference type="Proteomes" id="UP000002412">
    <property type="component" value="Chromosome"/>
</dbReference>
<dbReference type="GO" id="GO:0005524">
    <property type="term" value="F:ATP binding"/>
    <property type="evidence" value="ECO:0007669"/>
    <property type="project" value="UniProtKB-UniRule"/>
</dbReference>
<dbReference type="GO" id="GO:0004810">
    <property type="term" value="F:CCA tRNA nucleotidyltransferase activity"/>
    <property type="evidence" value="ECO:0007669"/>
    <property type="project" value="UniProtKB-UniRule"/>
</dbReference>
<dbReference type="GO" id="GO:0004112">
    <property type="term" value="F:cyclic-nucleotide phosphodiesterase activity"/>
    <property type="evidence" value="ECO:0007669"/>
    <property type="project" value="UniProtKB-UniRule"/>
</dbReference>
<dbReference type="GO" id="GO:0000287">
    <property type="term" value="F:magnesium ion binding"/>
    <property type="evidence" value="ECO:0007669"/>
    <property type="project" value="UniProtKB-UniRule"/>
</dbReference>
<dbReference type="GO" id="GO:0016791">
    <property type="term" value="F:phosphatase activity"/>
    <property type="evidence" value="ECO:0007669"/>
    <property type="project" value="UniProtKB-UniRule"/>
</dbReference>
<dbReference type="GO" id="GO:0000049">
    <property type="term" value="F:tRNA binding"/>
    <property type="evidence" value="ECO:0007669"/>
    <property type="project" value="UniProtKB-UniRule"/>
</dbReference>
<dbReference type="GO" id="GO:0042245">
    <property type="term" value="P:RNA repair"/>
    <property type="evidence" value="ECO:0007669"/>
    <property type="project" value="UniProtKB-KW"/>
</dbReference>
<dbReference type="GO" id="GO:0001680">
    <property type="term" value="P:tRNA 3'-terminal CCA addition"/>
    <property type="evidence" value="ECO:0007669"/>
    <property type="project" value="UniProtKB-UniRule"/>
</dbReference>
<dbReference type="CDD" id="cd00077">
    <property type="entry name" value="HDc"/>
    <property type="match status" value="1"/>
</dbReference>
<dbReference type="CDD" id="cd05398">
    <property type="entry name" value="NT_ClassII-CCAase"/>
    <property type="match status" value="1"/>
</dbReference>
<dbReference type="FunFam" id="1.10.3090.10:FF:000001">
    <property type="entry name" value="Multifunctional CCA protein"/>
    <property type="match status" value="1"/>
</dbReference>
<dbReference type="FunFam" id="3.30.460.10:FF:000016">
    <property type="entry name" value="Multifunctional CCA protein"/>
    <property type="match status" value="1"/>
</dbReference>
<dbReference type="Gene3D" id="3.30.460.10">
    <property type="entry name" value="Beta Polymerase, domain 2"/>
    <property type="match status" value="1"/>
</dbReference>
<dbReference type="Gene3D" id="1.10.3090.10">
    <property type="entry name" value="cca-adding enzyme, domain 2"/>
    <property type="match status" value="1"/>
</dbReference>
<dbReference type="HAMAP" id="MF_01261">
    <property type="entry name" value="CCA_bact_type1"/>
    <property type="match status" value="1"/>
</dbReference>
<dbReference type="HAMAP" id="MF_01262">
    <property type="entry name" value="CCA_bact_type2"/>
    <property type="match status" value="1"/>
</dbReference>
<dbReference type="InterPro" id="IPR012006">
    <property type="entry name" value="CCA_bact"/>
</dbReference>
<dbReference type="InterPro" id="IPR003607">
    <property type="entry name" value="HD/PDEase_dom"/>
</dbReference>
<dbReference type="InterPro" id="IPR006674">
    <property type="entry name" value="HD_domain"/>
</dbReference>
<dbReference type="InterPro" id="IPR043519">
    <property type="entry name" value="NT_sf"/>
</dbReference>
<dbReference type="InterPro" id="IPR002646">
    <property type="entry name" value="PolA_pol_head_dom"/>
</dbReference>
<dbReference type="InterPro" id="IPR032828">
    <property type="entry name" value="PolyA_RNA-bd"/>
</dbReference>
<dbReference type="InterPro" id="IPR050124">
    <property type="entry name" value="tRNA_CCA-adding_enzyme"/>
</dbReference>
<dbReference type="NCBIfam" id="NF008137">
    <property type="entry name" value="PRK10885.1"/>
    <property type="match status" value="1"/>
</dbReference>
<dbReference type="PANTHER" id="PTHR47545">
    <property type="entry name" value="MULTIFUNCTIONAL CCA PROTEIN"/>
    <property type="match status" value="1"/>
</dbReference>
<dbReference type="PANTHER" id="PTHR47545:SF1">
    <property type="entry name" value="MULTIFUNCTIONAL CCA PROTEIN"/>
    <property type="match status" value="1"/>
</dbReference>
<dbReference type="Pfam" id="PF01966">
    <property type="entry name" value="HD"/>
    <property type="match status" value="1"/>
</dbReference>
<dbReference type="Pfam" id="PF01743">
    <property type="entry name" value="PolyA_pol"/>
    <property type="match status" value="1"/>
</dbReference>
<dbReference type="Pfam" id="PF12627">
    <property type="entry name" value="PolyA_pol_RNAbd"/>
    <property type="match status" value="1"/>
</dbReference>
<dbReference type="PIRSF" id="PIRSF000813">
    <property type="entry name" value="CCA_bact"/>
    <property type="match status" value="1"/>
</dbReference>
<dbReference type="SMART" id="SM00471">
    <property type="entry name" value="HDc"/>
    <property type="match status" value="1"/>
</dbReference>
<dbReference type="SUPFAM" id="SSF81301">
    <property type="entry name" value="Nucleotidyltransferase"/>
    <property type="match status" value="1"/>
</dbReference>
<dbReference type="SUPFAM" id="SSF81891">
    <property type="entry name" value="Poly A polymerase C-terminal region-like"/>
    <property type="match status" value="1"/>
</dbReference>
<dbReference type="PROSITE" id="PS51831">
    <property type="entry name" value="HD"/>
    <property type="match status" value="1"/>
</dbReference>
<accession>A7FE75</accession>
<comment type="function">
    <text evidence="1">Catalyzes the addition and repair of the essential 3'-terminal CCA sequence in tRNAs without using a nucleic acid template. Adds these three nucleotides in the order of C, C, and A to the tRNA nucleotide-73, using CTP and ATP as substrates and producing inorganic pyrophosphate. tRNA 3'-terminal CCA addition is required both for tRNA processing and repair. Also involved in tRNA surveillance by mediating tandem CCA addition to generate a CCACCA at the 3' terminus of unstable tRNAs. While stable tRNAs receive only 3'-terminal CCA, unstable tRNAs are marked with CCACCA and rapidly degraded.</text>
</comment>
<comment type="catalytic activity">
    <reaction evidence="1">
        <text>a tRNA precursor + 2 CTP + ATP = a tRNA with a 3' CCA end + 3 diphosphate</text>
        <dbReference type="Rhea" id="RHEA:14433"/>
        <dbReference type="Rhea" id="RHEA-COMP:10465"/>
        <dbReference type="Rhea" id="RHEA-COMP:10468"/>
        <dbReference type="ChEBI" id="CHEBI:30616"/>
        <dbReference type="ChEBI" id="CHEBI:33019"/>
        <dbReference type="ChEBI" id="CHEBI:37563"/>
        <dbReference type="ChEBI" id="CHEBI:74896"/>
        <dbReference type="ChEBI" id="CHEBI:83071"/>
        <dbReference type="EC" id="2.7.7.72"/>
    </reaction>
</comment>
<comment type="catalytic activity">
    <reaction evidence="1">
        <text>a tRNA with a 3' CCA end + 2 CTP + ATP = a tRNA with a 3' CCACCA end + 3 diphosphate</text>
        <dbReference type="Rhea" id="RHEA:76235"/>
        <dbReference type="Rhea" id="RHEA-COMP:10468"/>
        <dbReference type="Rhea" id="RHEA-COMP:18655"/>
        <dbReference type="ChEBI" id="CHEBI:30616"/>
        <dbReference type="ChEBI" id="CHEBI:33019"/>
        <dbReference type="ChEBI" id="CHEBI:37563"/>
        <dbReference type="ChEBI" id="CHEBI:83071"/>
        <dbReference type="ChEBI" id="CHEBI:195187"/>
    </reaction>
    <physiologicalReaction direction="left-to-right" evidence="1">
        <dbReference type="Rhea" id="RHEA:76236"/>
    </physiologicalReaction>
</comment>
<comment type="cofactor">
    <cofactor evidence="1">
        <name>Mg(2+)</name>
        <dbReference type="ChEBI" id="CHEBI:18420"/>
    </cofactor>
    <text evidence="1">Magnesium is required for nucleotidyltransferase activity.</text>
</comment>
<comment type="cofactor">
    <cofactor evidence="1">
        <name>Ni(2+)</name>
        <dbReference type="ChEBI" id="CHEBI:49786"/>
    </cofactor>
    <text evidence="1">Nickel for phosphatase activity.</text>
</comment>
<comment type="subunit">
    <text evidence="1">Monomer. Can also form homodimers and oligomers.</text>
</comment>
<comment type="domain">
    <text evidence="1">Comprises two domains: an N-terminal domain containing the nucleotidyltransferase activity and a C-terminal HD domain associated with both phosphodiesterase and phosphatase activities.</text>
</comment>
<comment type="miscellaneous">
    <text evidence="1">A single active site specifically recognizes both ATP and CTP and is responsible for their addition.</text>
</comment>
<comment type="similarity">
    <text evidence="1">Belongs to the tRNA nucleotidyltransferase/poly(A) polymerase family. Bacterial CCA-adding enzyme type 1 subfamily.</text>
</comment>
<feature type="chain" id="PRO_1000067289" description="Multifunctional CCA protein">
    <location>
        <begin position="1"/>
        <end position="412"/>
    </location>
</feature>
<feature type="domain" description="HD" evidence="1">
    <location>
        <begin position="228"/>
        <end position="329"/>
    </location>
</feature>
<feature type="binding site" evidence="1">
    <location>
        <position position="8"/>
    </location>
    <ligand>
        <name>ATP</name>
        <dbReference type="ChEBI" id="CHEBI:30616"/>
    </ligand>
</feature>
<feature type="binding site" evidence="1">
    <location>
        <position position="8"/>
    </location>
    <ligand>
        <name>CTP</name>
        <dbReference type="ChEBI" id="CHEBI:37563"/>
    </ligand>
</feature>
<feature type="binding site" evidence="1">
    <location>
        <position position="11"/>
    </location>
    <ligand>
        <name>ATP</name>
        <dbReference type="ChEBI" id="CHEBI:30616"/>
    </ligand>
</feature>
<feature type="binding site" evidence="1">
    <location>
        <position position="11"/>
    </location>
    <ligand>
        <name>CTP</name>
        <dbReference type="ChEBI" id="CHEBI:37563"/>
    </ligand>
</feature>
<feature type="binding site" evidence="1">
    <location>
        <position position="21"/>
    </location>
    <ligand>
        <name>Mg(2+)</name>
        <dbReference type="ChEBI" id="CHEBI:18420"/>
    </ligand>
</feature>
<feature type="binding site" evidence="1">
    <location>
        <position position="23"/>
    </location>
    <ligand>
        <name>Mg(2+)</name>
        <dbReference type="ChEBI" id="CHEBI:18420"/>
    </ligand>
</feature>
<feature type="binding site" evidence="1">
    <location>
        <position position="91"/>
    </location>
    <ligand>
        <name>ATP</name>
        <dbReference type="ChEBI" id="CHEBI:30616"/>
    </ligand>
</feature>
<feature type="binding site" evidence="1">
    <location>
        <position position="91"/>
    </location>
    <ligand>
        <name>CTP</name>
        <dbReference type="ChEBI" id="CHEBI:37563"/>
    </ligand>
</feature>
<feature type="binding site" evidence="1">
    <location>
        <position position="137"/>
    </location>
    <ligand>
        <name>ATP</name>
        <dbReference type="ChEBI" id="CHEBI:30616"/>
    </ligand>
</feature>
<feature type="binding site" evidence="1">
    <location>
        <position position="137"/>
    </location>
    <ligand>
        <name>CTP</name>
        <dbReference type="ChEBI" id="CHEBI:37563"/>
    </ligand>
</feature>
<feature type="binding site" evidence="1">
    <location>
        <position position="140"/>
    </location>
    <ligand>
        <name>ATP</name>
        <dbReference type="ChEBI" id="CHEBI:30616"/>
    </ligand>
</feature>
<feature type="binding site" evidence="1">
    <location>
        <position position="140"/>
    </location>
    <ligand>
        <name>CTP</name>
        <dbReference type="ChEBI" id="CHEBI:37563"/>
    </ligand>
</feature>